<keyword id="KW-0067">ATP-binding</keyword>
<keyword id="KW-0963">Cytoplasm</keyword>
<keyword id="KW-0235">DNA replication</keyword>
<keyword id="KW-0238">DNA-binding</keyword>
<keyword id="KW-0446">Lipid-binding</keyword>
<keyword id="KW-0547">Nucleotide-binding</keyword>
<reference key="1">
    <citation type="journal article" date="2006" name="PLoS Biol.">
        <title>The genome of deep-sea vent chemolithoautotroph Thiomicrospira crunogena XCL-2.</title>
        <authorList>
            <person name="Scott K.M."/>
            <person name="Sievert S.M."/>
            <person name="Abril F.N."/>
            <person name="Ball L.A."/>
            <person name="Barrett C.J."/>
            <person name="Blake R.A."/>
            <person name="Boller A.J."/>
            <person name="Chain P.S.G."/>
            <person name="Clark J.A."/>
            <person name="Davis C.R."/>
            <person name="Detter C."/>
            <person name="Do K.F."/>
            <person name="Dobrinski K.P."/>
            <person name="Faza B.I."/>
            <person name="Fitzpatrick K.A."/>
            <person name="Freyermuth S.K."/>
            <person name="Harmer T.L."/>
            <person name="Hauser L.J."/>
            <person name="Huegler M."/>
            <person name="Kerfeld C.A."/>
            <person name="Klotz M.G."/>
            <person name="Kong W.W."/>
            <person name="Land M."/>
            <person name="Lapidus A."/>
            <person name="Larimer F.W."/>
            <person name="Longo D.L."/>
            <person name="Lucas S."/>
            <person name="Malfatti S.A."/>
            <person name="Massey S.E."/>
            <person name="Martin D.D."/>
            <person name="McCuddin Z."/>
            <person name="Meyer F."/>
            <person name="Moore J.L."/>
            <person name="Ocampo L.H. Jr."/>
            <person name="Paul J.H."/>
            <person name="Paulsen I.T."/>
            <person name="Reep D.K."/>
            <person name="Ren Q."/>
            <person name="Ross R.L."/>
            <person name="Sato P.Y."/>
            <person name="Thomas P."/>
            <person name="Tinkham L.E."/>
            <person name="Zeruth G.T."/>
        </authorList>
    </citation>
    <scope>NUCLEOTIDE SEQUENCE [LARGE SCALE GENOMIC DNA]</scope>
    <source>
        <strain>DSM 25203 / XCL-2</strain>
    </source>
</reference>
<comment type="function">
    <text evidence="1">Plays an essential role in the initiation and regulation of chromosomal replication. ATP-DnaA binds to the origin of replication (oriC) to initiate formation of the DNA replication initiation complex once per cell cycle. Binds the DnaA box (a 9 base pair repeat at the origin) and separates the double-stranded (ds)DNA. Forms a right-handed helical filament on oriC DNA; dsDNA binds to the exterior of the filament while single-stranded (ss)DNA is stabiized in the filament's interior. The ATP-DnaA-oriC complex binds and stabilizes one strand of the AT-rich DNA unwinding element (DUE), permitting loading of DNA polymerase. After initiation quickly degrades to an ADP-DnaA complex that is not apt for DNA replication. Binds acidic phospholipids.</text>
</comment>
<comment type="subunit">
    <text evidence="1">Oligomerizes as a right-handed, spiral filament on DNA at oriC.</text>
</comment>
<comment type="subcellular location">
    <subcellularLocation>
        <location evidence="1">Cytoplasm</location>
    </subcellularLocation>
</comment>
<comment type="domain">
    <text evidence="1">Domain I is involved in oligomerization and binding regulators, domain II is flexibile and of varying length in different bacteria, domain III forms the AAA+ region, while domain IV binds dsDNA.</text>
</comment>
<comment type="similarity">
    <text evidence="1">Belongs to the DnaA family.</text>
</comment>
<evidence type="ECO:0000255" key="1">
    <source>
        <dbReference type="HAMAP-Rule" id="MF_00377"/>
    </source>
</evidence>
<evidence type="ECO:0000256" key="2">
    <source>
        <dbReference type="SAM" id="MobiDB-lite"/>
    </source>
</evidence>
<dbReference type="EMBL" id="CP000109">
    <property type="protein sequence ID" value="ABB40598.1"/>
    <property type="molecule type" value="Genomic_DNA"/>
</dbReference>
<dbReference type="SMR" id="Q31JS5"/>
<dbReference type="STRING" id="317025.Tcr_0001"/>
<dbReference type="KEGG" id="tcx:Tcr_0001"/>
<dbReference type="eggNOG" id="COG0593">
    <property type="taxonomic scope" value="Bacteria"/>
</dbReference>
<dbReference type="HOGENOM" id="CLU_026910_0_1_6"/>
<dbReference type="OrthoDB" id="9807019at2"/>
<dbReference type="GO" id="GO:0005737">
    <property type="term" value="C:cytoplasm"/>
    <property type="evidence" value="ECO:0007669"/>
    <property type="project" value="UniProtKB-SubCell"/>
</dbReference>
<dbReference type="GO" id="GO:0005886">
    <property type="term" value="C:plasma membrane"/>
    <property type="evidence" value="ECO:0007669"/>
    <property type="project" value="TreeGrafter"/>
</dbReference>
<dbReference type="GO" id="GO:0005524">
    <property type="term" value="F:ATP binding"/>
    <property type="evidence" value="ECO:0007669"/>
    <property type="project" value="UniProtKB-UniRule"/>
</dbReference>
<dbReference type="GO" id="GO:0016887">
    <property type="term" value="F:ATP hydrolysis activity"/>
    <property type="evidence" value="ECO:0007669"/>
    <property type="project" value="InterPro"/>
</dbReference>
<dbReference type="GO" id="GO:0003688">
    <property type="term" value="F:DNA replication origin binding"/>
    <property type="evidence" value="ECO:0007669"/>
    <property type="project" value="UniProtKB-UniRule"/>
</dbReference>
<dbReference type="GO" id="GO:0008289">
    <property type="term" value="F:lipid binding"/>
    <property type="evidence" value="ECO:0007669"/>
    <property type="project" value="UniProtKB-KW"/>
</dbReference>
<dbReference type="GO" id="GO:0006270">
    <property type="term" value="P:DNA replication initiation"/>
    <property type="evidence" value="ECO:0007669"/>
    <property type="project" value="UniProtKB-UniRule"/>
</dbReference>
<dbReference type="GO" id="GO:0006275">
    <property type="term" value="P:regulation of DNA replication"/>
    <property type="evidence" value="ECO:0007669"/>
    <property type="project" value="UniProtKB-UniRule"/>
</dbReference>
<dbReference type="CDD" id="cd00009">
    <property type="entry name" value="AAA"/>
    <property type="match status" value="1"/>
</dbReference>
<dbReference type="CDD" id="cd06571">
    <property type="entry name" value="Bac_DnaA_C"/>
    <property type="match status" value="1"/>
</dbReference>
<dbReference type="FunFam" id="1.10.8.60:FF:000003">
    <property type="entry name" value="Chromosomal replication initiator protein DnaA"/>
    <property type="match status" value="1"/>
</dbReference>
<dbReference type="FunFam" id="3.40.50.300:FF:000103">
    <property type="entry name" value="Chromosomal replication initiator protein DnaA"/>
    <property type="match status" value="1"/>
</dbReference>
<dbReference type="Gene3D" id="1.10.1750.10">
    <property type="match status" value="1"/>
</dbReference>
<dbReference type="Gene3D" id="1.10.8.60">
    <property type="match status" value="1"/>
</dbReference>
<dbReference type="Gene3D" id="3.30.300.180">
    <property type="match status" value="1"/>
</dbReference>
<dbReference type="Gene3D" id="3.40.50.300">
    <property type="entry name" value="P-loop containing nucleotide triphosphate hydrolases"/>
    <property type="match status" value="1"/>
</dbReference>
<dbReference type="HAMAP" id="MF_00377">
    <property type="entry name" value="DnaA_bact"/>
    <property type="match status" value="1"/>
</dbReference>
<dbReference type="InterPro" id="IPR003593">
    <property type="entry name" value="AAA+_ATPase"/>
</dbReference>
<dbReference type="InterPro" id="IPR001957">
    <property type="entry name" value="Chromosome_initiator_DnaA"/>
</dbReference>
<dbReference type="InterPro" id="IPR020591">
    <property type="entry name" value="Chromosome_initiator_DnaA-like"/>
</dbReference>
<dbReference type="InterPro" id="IPR018312">
    <property type="entry name" value="Chromosome_initiator_DnaA_CS"/>
</dbReference>
<dbReference type="InterPro" id="IPR013159">
    <property type="entry name" value="DnaA_C"/>
</dbReference>
<dbReference type="InterPro" id="IPR013317">
    <property type="entry name" value="DnaA_dom"/>
</dbReference>
<dbReference type="InterPro" id="IPR024633">
    <property type="entry name" value="DnaA_N_dom"/>
</dbReference>
<dbReference type="InterPro" id="IPR038454">
    <property type="entry name" value="DnaA_N_sf"/>
</dbReference>
<dbReference type="InterPro" id="IPR027417">
    <property type="entry name" value="P-loop_NTPase"/>
</dbReference>
<dbReference type="InterPro" id="IPR010921">
    <property type="entry name" value="Trp_repressor/repl_initiator"/>
</dbReference>
<dbReference type="NCBIfam" id="TIGR00362">
    <property type="entry name" value="DnaA"/>
    <property type="match status" value="1"/>
</dbReference>
<dbReference type="PANTHER" id="PTHR30050">
    <property type="entry name" value="CHROMOSOMAL REPLICATION INITIATOR PROTEIN DNAA"/>
    <property type="match status" value="1"/>
</dbReference>
<dbReference type="PANTHER" id="PTHR30050:SF2">
    <property type="entry name" value="CHROMOSOMAL REPLICATION INITIATOR PROTEIN DNAA"/>
    <property type="match status" value="1"/>
</dbReference>
<dbReference type="Pfam" id="PF00308">
    <property type="entry name" value="Bac_DnaA"/>
    <property type="match status" value="1"/>
</dbReference>
<dbReference type="Pfam" id="PF08299">
    <property type="entry name" value="Bac_DnaA_C"/>
    <property type="match status" value="1"/>
</dbReference>
<dbReference type="Pfam" id="PF11638">
    <property type="entry name" value="DnaA_N"/>
    <property type="match status" value="1"/>
</dbReference>
<dbReference type="PRINTS" id="PR00051">
    <property type="entry name" value="DNAA"/>
</dbReference>
<dbReference type="SMART" id="SM00382">
    <property type="entry name" value="AAA"/>
    <property type="match status" value="1"/>
</dbReference>
<dbReference type="SMART" id="SM00760">
    <property type="entry name" value="Bac_DnaA_C"/>
    <property type="match status" value="1"/>
</dbReference>
<dbReference type="SUPFAM" id="SSF52540">
    <property type="entry name" value="P-loop containing nucleoside triphosphate hydrolases"/>
    <property type="match status" value="1"/>
</dbReference>
<dbReference type="SUPFAM" id="SSF48295">
    <property type="entry name" value="TrpR-like"/>
    <property type="match status" value="1"/>
</dbReference>
<dbReference type="PROSITE" id="PS01008">
    <property type="entry name" value="DNAA"/>
    <property type="match status" value="1"/>
</dbReference>
<organism>
    <name type="scientific">Hydrogenovibrio crunogenus (strain DSM 25203 / XCL-2)</name>
    <name type="common">Thiomicrospira crunogena</name>
    <dbReference type="NCBI Taxonomy" id="317025"/>
    <lineage>
        <taxon>Bacteria</taxon>
        <taxon>Pseudomonadati</taxon>
        <taxon>Pseudomonadota</taxon>
        <taxon>Gammaproteobacteria</taxon>
        <taxon>Thiotrichales</taxon>
        <taxon>Piscirickettsiaceae</taxon>
        <taxon>Hydrogenovibrio</taxon>
    </lineage>
</organism>
<feature type="chain" id="PRO_1000048754" description="Chromosomal replication initiator protein DnaA">
    <location>
        <begin position="1"/>
        <end position="467"/>
    </location>
</feature>
<feature type="region of interest" description="Domain I, interacts with DnaA modulators" evidence="1">
    <location>
        <begin position="1"/>
        <end position="85"/>
    </location>
</feature>
<feature type="region of interest" description="Domain II" evidence="1">
    <location>
        <begin position="85"/>
        <end position="130"/>
    </location>
</feature>
<feature type="region of interest" description="Disordered" evidence="2">
    <location>
        <begin position="87"/>
        <end position="129"/>
    </location>
</feature>
<feature type="region of interest" description="Domain III, AAA+ region" evidence="1">
    <location>
        <begin position="131"/>
        <end position="347"/>
    </location>
</feature>
<feature type="region of interest" description="Domain IV, binds dsDNA" evidence="1">
    <location>
        <begin position="348"/>
        <end position="467"/>
    </location>
</feature>
<feature type="compositionally biased region" description="Basic and acidic residues" evidence="2">
    <location>
        <begin position="99"/>
        <end position="109"/>
    </location>
</feature>
<feature type="binding site" evidence="1">
    <location>
        <position position="175"/>
    </location>
    <ligand>
        <name>ATP</name>
        <dbReference type="ChEBI" id="CHEBI:30616"/>
    </ligand>
</feature>
<feature type="binding site" evidence="1">
    <location>
        <position position="177"/>
    </location>
    <ligand>
        <name>ATP</name>
        <dbReference type="ChEBI" id="CHEBI:30616"/>
    </ligand>
</feature>
<feature type="binding site" evidence="1">
    <location>
        <position position="178"/>
    </location>
    <ligand>
        <name>ATP</name>
        <dbReference type="ChEBI" id="CHEBI:30616"/>
    </ligand>
</feature>
<feature type="binding site" evidence="1">
    <location>
        <position position="179"/>
    </location>
    <ligand>
        <name>ATP</name>
        <dbReference type="ChEBI" id="CHEBI:30616"/>
    </ligand>
</feature>
<proteinExistence type="inferred from homology"/>
<accession>Q31JS5</accession>
<gene>
    <name evidence="1" type="primary">dnaA</name>
    <name type="ordered locus">Tcr_0001</name>
</gene>
<name>DNAA_HYDCU</name>
<protein>
    <recommendedName>
        <fullName evidence="1">Chromosomal replication initiator protein DnaA</fullName>
    </recommendedName>
</protein>
<sequence length="467" mass="53058">MTTTLWPQVLKQLEAVLNDQQFLTWIRPLEAVEEDNTLRLIAPSGFILDWVNKKLLSQIKQAVYLVAPVNTPEVTLEVGEYAIESFNEPENTSVPQPLRETKAEREAAEKAASSTSKKKSDSPPKKTIKHNLNTNFTFDTFVEGKANQLAAAAARQVADNPGGSYNPFFIYGGVGLGKTHLMHAIGNELMRRDPNARVVYLHSERFVADMVNALRHNKIDEFKRFYRSLDALLIDDIQFFAKKEQSQEEFFHTFNTLLEGNKQVILTSDRFPKEVDGLEDRLKSRFGWGLTIAVEPPEFEMRVAILMKKAAEFGFLLPDEVAFFIAKRLRGNVRDLEGALKRVGAFAQFTQQLVTVDLAKDALKDLLALQQKMVTLENIQKTVADYYKIRVADLLSKRRTRNIARPRQMSMAISKELTSHSLPEIGDAFGGRDHTTVLHAVRKINELKETDHRIEEDFNSLIRIITN</sequence>